<feature type="chain" id="PRO_1000048396" description="Light-independent protochlorophyllide reductase subunit N">
    <location>
        <begin position="1"/>
        <end position="428"/>
    </location>
</feature>
<feature type="binding site" evidence="1">
    <location>
        <position position="29"/>
    </location>
    <ligand>
        <name>[4Fe-4S] cluster</name>
        <dbReference type="ChEBI" id="CHEBI:49883"/>
        <note>ligand shared with heterodimeric partner</note>
    </ligand>
</feature>
<feature type="binding site" evidence="1">
    <location>
        <position position="54"/>
    </location>
    <ligand>
        <name>[4Fe-4S] cluster</name>
        <dbReference type="ChEBI" id="CHEBI:49883"/>
        <note>ligand shared with heterodimeric partner</note>
    </ligand>
</feature>
<feature type="binding site" evidence="1">
    <location>
        <position position="115"/>
    </location>
    <ligand>
        <name>[4Fe-4S] cluster</name>
        <dbReference type="ChEBI" id="CHEBI:49883"/>
        <note>ligand shared with heterodimeric partner</note>
    </ligand>
</feature>
<comment type="function">
    <text evidence="1">Component of the dark-operative protochlorophyllide reductase (DPOR) that uses Mg-ATP and reduced ferredoxin to reduce ring D of protochlorophyllide (Pchlide) to form chlorophyllide a (Chlide). This reaction is light-independent. The NB-protein (BchN-BchB) is the catalytic component of the complex.</text>
</comment>
<comment type="catalytic activity">
    <reaction evidence="1">
        <text>chlorophyllide a + oxidized 2[4Fe-4S]-[ferredoxin] + 2 ADP + 2 phosphate = protochlorophyllide a + reduced 2[4Fe-4S]-[ferredoxin] + 2 ATP + 2 H2O</text>
        <dbReference type="Rhea" id="RHEA:28202"/>
        <dbReference type="Rhea" id="RHEA-COMP:10002"/>
        <dbReference type="Rhea" id="RHEA-COMP:10004"/>
        <dbReference type="ChEBI" id="CHEBI:15377"/>
        <dbReference type="ChEBI" id="CHEBI:30616"/>
        <dbReference type="ChEBI" id="CHEBI:33722"/>
        <dbReference type="ChEBI" id="CHEBI:33723"/>
        <dbReference type="ChEBI" id="CHEBI:43474"/>
        <dbReference type="ChEBI" id="CHEBI:83348"/>
        <dbReference type="ChEBI" id="CHEBI:83350"/>
        <dbReference type="ChEBI" id="CHEBI:456216"/>
        <dbReference type="EC" id="1.3.7.7"/>
    </reaction>
</comment>
<comment type="cofactor">
    <cofactor evidence="1">
        <name>[4Fe-4S] cluster</name>
        <dbReference type="ChEBI" id="CHEBI:49883"/>
    </cofactor>
    <text evidence="1">Binds 1 [4Fe-4S] cluster per heterodimer. The cluster is bound at the heterodimer interface by residues from both subunits.</text>
</comment>
<comment type="pathway">
    <text evidence="1">Porphyrin-containing compound metabolism; bacteriochlorophyll biosynthesis (light-independent).</text>
</comment>
<comment type="subunit">
    <text evidence="1">Protochlorophyllide reductase is composed of three subunits; BchL, BchN and BchB. Forms a heterotetramer of two BchB and two BchN subunits.</text>
</comment>
<comment type="similarity">
    <text evidence="1">Belongs to the BchN/ChlN family.</text>
</comment>
<organism>
    <name type="scientific">Cereibacter sphaeroides (strain ATCC 17025 / ATH 2.4.3)</name>
    <name type="common">Rhodobacter sphaeroides</name>
    <dbReference type="NCBI Taxonomy" id="349102"/>
    <lineage>
        <taxon>Bacteria</taxon>
        <taxon>Pseudomonadati</taxon>
        <taxon>Pseudomonadota</taxon>
        <taxon>Alphaproteobacteria</taxon>
        <taxon>Rhodobacterales</taxon>
        <taxon>Paracoccaceae</taxon>
        <taxon>Cereibacter</taxon>
    </lineage>
</organism>
<sequence>MSLDLPPPPARGCRNGDVLKERGQREVFCGLTGIIWLHRKMQDAFFLVVGSRTCAHLLQSAAGVMIFAEPRFGTAILEEKDLAGLADANAELDREVERLLSRRPDIRQLFLVGSCPSEVIKLDLHRAAERLSAQHGPAVRVYNFTGSGIETTFTQGEDACLASIVPTLPATEARELLLVGALPDVVEDQAVSLLTALGIGPIRVLPAHHAAEAPGVGPNTVFALVQPFLGETHGALTRRGARHIAAPFPFGEEGTTLWLKAIADEFGVSPAKFEEVTAAPRARARKAVAAASETLKGKSLFFFPDSQLEPSLARFLTRECGMSAIEVGTPFLHRGILGPDLDLLAEGPVISEGQDVERQIDRVRATNPDLTVCGLGLANPLEAEGFTTKWAIELVFTPVHFYEQAGDLAGLFARPLRRRAILRREAAE</sequence>
<name>BCHN_CERS5</name>
<keyword id="KW-0004">4Fe-4S</keyword>
<keyword id="KW-0067">ATP-binding</keyword>
<keyword id="KW-0077">Bacteriochlorophyll biosynthesis</keyword>
<keyword id="KW-0149">Chlorophyll biosynthesis</keyword>
<keyword id="KW-0408">Iron</keyword>
<keyword id="KW-0411">Iron-sulfur</keyword>
<keyword id="KW-0479">Metal-binding</keyword>
<keyword id="KW-0547">Nucleotide-binding</keyword>
<keyword id="KW-0560">Oxidoreductase</keyword>
<keyword id="KW-0602">Photosynthesis</keyword>
<accession>A4WR97</accession>
<gene>
    <name evidence="1" type="primary">bchN</name>
    <name type="ordered locus">Rsph17025_1010</name>
</gene>
<reference key="1">
    <citation type="submission" date="2007-04" db="EMBL/GenBank/DDBJ databases">
        <title>Complete sequence of chromosome of Rhodobacter sphaeroides ATCC 17025.</title>
        <authorList>
            <consortium name="US DOE Joint Genome Institute"/>
            <person name="Copeland A."/>
            <person name="Lucas S."/>
            <person name="Lapidus A."/>
            <person name="Barry K."/>
            <person name="Detter J.C."/>
            <person name="Glavina del Rio T."/>
            <person name="Hammon N."/>
            <person name="Israni S."/>
            <person name="Dalin E."/>
            <person name="Tice H."/>
            <person name="Pitluck S."/>
            <person name="Chertkov O."/>
            <person name="Brettin T."/>
            <person name="Bruce D."/>
            <person name="Han C."/>
            <person name="Schmutz J."/>
            <person name="Larimer F."/>
            <person name="Land M."/>
            <person name="Hauser L."/>
            <person name="Kyrpides N."/>
            <person name="Kim E."/>
            <person name="Richardson P."/>
            <person name="Mackenzie C."/>
            <person name="Choudhary M."/>
            <person name="Donohue T.J."/>
            <person name="Kaplan S."/>
        </authorList>
    </citation>
    <scope>NUCLEOTIDE SEQUENCE [LARGE SCALE GENOMIC DNA]</scope>
    <source>
        <strain>ATCC 17025 / ATH 2.4.3</strain>
    </source>
</reference>
<protein>
    <recommendedName>
        <fullName evidence="1">Light-independent protochlorophyllide reductase subunit N</fullName>
        <shortName evidence="1">DPOR subunit N</shortName>
        <shortName evidence="1">LI-POR subunit N</shortName>
        <ecNumber evidence="1">1.3.7.7</ecNumber>
    </recommendedName>
</protein>
<proteinExistence type="inferred from homology"/>
<evidence type="ECO:0000255" key="1">
    <source>
        <dbReference type="HAMAP-Rule" id="MF_00352"/>
    </source>
</evidence>
<dbReference type="EC" id="1.3.7.7" evidence="1"/>
<dbReference type="EMBL" id="CP000661">
    <property type="protein sequence ID" value="ABP69911.1"/>
    <property type="molecule type" value="Genomic_DNA"/>
</dbReference>
<dbReference type="SMR" id="A4WR97"/>
<dbReference type="STRING" id="349102.Rsph17025_1010"/>
<dbReference type="KEGG" id="rsq:Rsph17025_1010"/>
<dbReference type="eggNOG" id="COG2710">
    <property type="taxonomic scope" value="Bacteria"/>
</dbReference>
<dbReference type="HOGENOM" id="CLU_037170_0_0_5"/>
<dbReference type="BioCyc" id="RSPH349102:G1G8M-1036-MONOMER"/>
<dbReference type="UniPathway" id="UPA00671"/>
<dbReference type="GO" id="GO:0051539">
    <property type="term" value="F:4 iron, 4 sulfur cluster binding"/>
    <property type="evidence" value="ECO:0007669"/>
    <property type="project" value="UniProtKB-UniRule"/>
</dbReference>
<dbReference type="GO" id="GO:0005524">
    <property type="term" value="F:ATP binding"/>
    <property type="evidence" value="ECO:0007669"/>
    <property type="project" value="UniProtKB-UniRule"/>
</dbReference>
<dbReference type="GO" id="GO:0046872">
    <property type="term" value="F:metal ion binding"/>
    <property type="evidence" value="ECO:0007669"/>
    <property type="project" value="UniProtKB-KW"/>
</dbReference>
<dbReference type="GO" id="GO:0016730">
    <property type="term" value="F:oxidoreductase activity, acting on iron-sulfur proteins as donors"/>
    <property type="evidence" value="ECO:0007669"/>
    <property type="project" value="InterPro"/>
</dbReference>
<dbReference type="GO" id="GO:0016636">
    <property type="term" value="F:oxidoreductase activity, acting on the CH-CH group of donors, iron-sulfur protein as acceptor"/>
    <property type="evidence" value="ECO:0007669"/>
    <property type="project" value="UniProtKB-UniRule"/>
</dbReference>
<dbReference type="GO" id="GO:0036070">
    <property type="term" value="P:light-independent bacteriochlorophyll biosynthetic process"/>
    <property type="evidence" value="ECO:0007669"/>
    <property type="project" value="UniProtKB-UniRule"/>
</dbReference>
<dbReference type="GO" id="GO:0019685">
    <property type="term" value="P:photosynthesis, dark reaction"/>
    <property type="evidence" value="ECO:0007669"/>
    <property type="project" value="InterPro"/>
</dbReference>
<dbReference type="Gene3D" id="3.40.50.1980">
    <property type="entry name" value="Nitrogenase molybdenum iron protein domain"/>
    <property type="match status" value="3"/>
</dbReference>
<dbReference type="HAMAP" id="MF_00352">
    <property type="entry name" value="ChlN_BchN"/>
    <property type="match status" value="1"/>
</dbReference>
<dbReference type="InterPro" id="IPR050293">
    <property type="entry name" value="LIPOR_BchN/ChlN"/>
</dbReference>
<dbReference type="InterPro" id="IPR000510">
    <property type="entry name" value="Nase/OxRdtase_comp1"/>
</dbReference>
<dbReference type="InterPro" id="IPR005970">
    <property type="entry name" value="Protochl_reductN"/>
</dbReference>
<dbReference type="NCBIfam" id="TIGR01279">
    <property type="entry name" value="DPOR_bchN"/>
    <property type="match status" value="1"/>
</dbReference>
<dbReference type="NCBIfam" id="NF002768">
    <property type="entry name" value="PRK02842.1"/>
    <property type="match status" value="1"/>
</dbReference>
<dbReference type="PANTHER" id="PTHR39429">
    <property type="entry name" value="LIGHT-INDEPENDENT PROTOCHLOROPHYLLIDE REDUCTASE SUBUNIT N"/>
    <property type="match status" value="1"/>
</dbReference>
<dbReference type="PANTHER" id="PTHR39429:SF3">
    <property type="entry name" value="LIGHT-INDEPENDENT PROTOCHLOROPHYLLIDE REDUCTASE SUBUNIT N"/>
    <property type="match status" value="1"/>
</dbReference>
<dbReference type="Pfam" id="PF00148">
    <property type="entry name" value="Oxidored_nitro"/>
    <property type="match status" value="1"/>
</dbReference>
<dbReference type="PIRSF" id="PIRSF000162">
    <property type="entry name" value="P_chlorophyll_rd"/>
    <property type="match status" value="1"/>
</dbReference>
<dbReference type="SUPFAM" id="SSF53807">
    <property type="entry name" value="Helical backbone' metal receptor"/>
    <property type="match status" value="1"/>
</dbReference>